<reference key="1">
    <citation type="submission" date="2004-03" db="EMBL/GenBank/DDBJ databases">
        <authorList>
            <consortium name="NIH - Zebrafish Gene Collection (ZGC) project"/>
        </authorList>
    </citation>
    <scope>NUCLEOTIDE SEQUENCE [LARGE SCALE MRNA]</scope>
    <source>
        <tissue>Eye</tissue>
    </source>
</reference>
<accession>Q6NWZ9</accession>
<feature type="chain" id="PRO_0000206610" description="Cysteine dioxygenase type 1">
    <location>
        <begin position="1"/>
        <end position="201"/>
    </location>
</feature>
<feature type="binding site" evidence="2">
    <location>
        <position position="86"/>
    </location>
    <ligand>
        <name>Fe cation</name>
        <dbReference type="ChEBI" id="CHEBI:24875"/>
        <note>catalytic</note>
    </ligand>
</feature>
<feature type="binding site" evidence="2">
    <location>
        <position position="88"/>
    </location>
    <ligand>
        <name>Fe cation</name>
        <dbReference type="ChEBI" id="CHEBI:24875"/>
        <note>catalytic</note>
    </ligand>
</feature>
<feature type="binding site" evidence="2">
    <location>
        <position position="141"/>
    </location>
    <ligand>
        <name>Fe cation</name>
        <dbReference type="ChEBI" id="CHEBI:24875"/>
        <note>catalytic</note>
    </ligand>
</feature>
<feature type="cross-link" description="3'-(S-cysteinyl)-tyrosine (Cys-Tyr)" evidence="2">
    <location>
        <begin position="93"/>
        <end position="158"/>
    </location>
</feature>
<keyword id="KW-0223">Dioxygenase</keyword>
<keyword id="KW-0408">Iron</keyword>
<keyword id="KW-0479">Metal-binding</keyword>
<keyword id="KW-0560">Oxidoreductase</keyword>
<keyword id="KW-1185">Reference proteome</keyword>
<keyword id="KW-0883">Thioether bond</keyword>
<sequence>MEQTEVMKPETLEDLIKTLHQIFQSDSINVEEVQNLMESYQSNPQDWMKFAKFDQYRYTRNLVDEGNGKFNLMILCWGEGHGSSIHDHTDSHCFLKLLQGQLKETLFDWPDRKLQSGMKPRGQSVLQENQCAYINDSLGLHRVENVSHTEPAVSLHLYSPPFQSCRTFDQRTGHHNTVKMTFWSKYGERTPYELSVSQENN</sequence>
<comment type="function">
    <text evidence="2">Catalyzes the oxidation of cysteine to cysteine sulfinic acid with addition of molecular dioxygen.</text>
</comment>
<comment type="catalytic activity">
    <reaction evidence="2">
        <text>L-cysteine + O2 = 3-sulfino-L-alanine + H(+)</text>
        <dbReference type="Rhea" id="RHEA:20441"/>
        <dbReference type="ChEBI" id="CHEBI:15378"/>
        <dbReference type="ChEBI" id="CHEBI:15379"/>
        <dbReference type="ChEBI" id="CHEBI:35235"/>
        <dbReference type="ChEBI" id="CHEBI:61085"/>
        <dbReference type="EC" id="1.13.11.20"/>
    </reaction>
    <physiologicalReaction direction="left-to-right" evidence="2">
        <dbReference type="Rhea" id="RHEA:20442"/>
    </physiologicalReaction>
</comment>
<comment type="cofactor">
    <cofactor evidence="1">
        <name>Fe cation</name>
        <dbReference type="ChEBI" id="CHEBI:24875"/>
    </cofactor>
    <cofactor evidence="1">
        <name>Ni(2+)</name>
        <dbReference type="ChEBI" id="CHEBI:49786"/>
    </cofactor>
    <cofactor evidence="1">
        <name>Zn(2+)</name>
        <dbReference type="ChEBI" id="CHEBI:29105"/>
    </cofactor>
    <text evidence="1">Binds 1 Fe cation per subunit. Ni(2+) and Zn(2+) can be used to a lesser extent.</text>
</comment>
<comment type="pathway">
    <text>Organosulfur biosynthesis; taurine biosynthesis; hypotaurine from L-cysteine: step 1/2.</text>
</comment>
<comment type="subunit">
    <text evidence="2">Monomer.</text>
</comment>
<comment type="PTM">
    <text evidence="2">The thioether cross-link between Cys-93 and Tyr-158 plays a structural role through stabilizing the Fe(2+) ion, and prevents the production of highly damaging free hydroxyl radicals by holding the oxygen radical via hydroxyl hydrogen.</text>
</comment>
<comment type="similarity">
    <text evidence="3">Belongs to the cysteine dioxygenase family.</text>
</comment>
<dbReference type="EC" id="1.13.11.20" evidence="2"/>
<dbReference type="EMBL" id="BC059531">
    <property type="protein sequence ID" value="AAH59531.1"/>
    <property type="molecule type" value="mRNA"/>
</dbReference>
<dbReference type="EMBL" id="BC067344">
    <property type="protein sequence ID" value="AAH67344.1"/>
    <property type="molecule type" value="mRNA"/>
</dbReference>
<dbReference type="RefSeq" id="NP_957035.2">
    <property type="nucleotide sequence ID" value="NM_200741.1"/>
</dbReference>
<dbReference type="SMR" id="Q6NWZ9"/>
<dbReference type="FunCoup" id="Q6NWZ9">
    <property type="interactions" value="232"/>
</dbReference>
<dbReference type="STRING" id="7955.ENSDARP00000137807"/>
<dbReference type="DNASU" id="393714"/>
<dbReference type="Ensembl" id="ENSDART00000168516">
    <property type="protein sequence ID" value="ENSDARP00000141126"/>
    <property type="gene ID" value="ENSDARG00000099389"/>
</dbReference>
<dbReference type="GeneID" id="393714"/>
<dbReference type="KEGG" id="dre:393714"/>
<dbReference type="AGR" id="ZFIN:ZDB-GENE-040426-1704"/>
<dbReference type="CTD" id="1036"/>
<dbReference type="ZFIN" id="ZDB-GENE-040426-1704">
    <property type="gene designation" value="cdo1"/>
</dbReference>
<dbReference type="InParanoid" id="Q6NWZ9"/>
<dbReference type="OMA" id="YTENQVT"/>
<dbReference type="OrthoDB" id="543511at2759"/>
<dbReference type="PhylomeDB" id="Q6NWZ9"/>
<dbReference type="UniPathway" id="UPA00012">
    <property type="reaction ID" value="UER00537"/>
</dbReference>
<dbReference type="PRO" id="PR:Q6NWZ9"/>
<dbReference type="Proteomes" id="UP000000437">
    <property type="component" value="Unplaced"/>
</dbReference>
<dbReference type="Bgee" id="ENSDARG00000099389">
    <property type="expression patterns" value="Expressed in liver and 25 other cell types or tissues"/>
</dbReference>
<dbReference type="GO" id="GO:0017172">
    <property type="term" value="F:cysteine dioxygenase activity"/>
    <property type="evidence" value="ECO:0000250"/>
    <property type="project" value="UniProtKB"/>
</dbReference>
<dbReference type="GO" id="GO:0008198">
    <property type="term" value="F:ferrous iron binding"/>
    <property type="evidence" value="ECO:0000250"/>
    <property type="project" value="UniProtKB"/>
</dbReference>
<dbReference type="GO" id="GO:0016151">
    <property type="term" value="F:nickel cation binding"/>
    <property type="evidence" value="ECO:0000250"/>
    <property type="project" value="UniProtKB"/>
</dbReference>
<dbReference type="GO" id="GO:0008270">
    <property type="term" value="F:zinc ion binding"/>
    <property type="evidence" value="ECO:0000250"/>
    <property type="project" value="UniProtKB"/>
</dbReference>
<dbReference type="GO" id="GO:0019448">
    <property type="term" value="P:L-cysteine catabolic process"/>
    <property type="evidence" value="ECO:0000318"/>
    <property type="project" value="GO_Central"/>
</dbReference>
<dbReference type="GO" id="GO:0042412">
    <property type="term" value="P:taurine biosynthetic process"/>
    <property type="evidence" value="ECO:0007669"/>
    <property type="project" value="UniProtKB-UniPathway"/>
</dbReference>
<dbReference type="CDD" id="cd10548">
    <property type="entry name" value="cupin_CDO"/>
    <property type="match status" value="1"/>
</dbReference>
<dbReference type="FunFam" id="2.60.120.10:FF:000045">
    <property type="entry name" value="Cysteine dioxygenase 1"/>
    <property type="match status" value="1"/>
</dbReference>
<dbReference type="Gene3D" id="2.60.120.10">
    <property type="entry name" value="Jelly Rolls"/>
    <property type="match status" value="1"/>
</dbReference>
<dbReference type="InterPro" id="IPR010300">
    <property type="entry name" value="CDO_1"/>
</dbReference>
<dbReference type="InterPro" id="IPR014710">
    <property type="entry name" value="RmlC-like_jellyroll"/>
</dbReference>
<dbReference type="InterPro" id="IPR011051">
    <property type="entry name" value="RmlC_Cupin_sf"/>
</dbReference>
<dbReference type="PANTHER" id="PTHR12918">
    <property type="entry name" value="CYSTEINE DIOXYGENASE"/>
    <property type="match status" value="1"/>
</dbReference>
<dbReference type="PANTHER" id="PTHR12918:SF1">
    <property type="entry name" value="CYSTEINE DIOXYGENASE TYPE 1"/>
    <property type="match status" value="1"/>
</dbReference>
<dbReference type="Pfam" id="PF05995">
    <property type="entry name" value="CDO_I"/>
    <property type="match status" value="1"/>
</dbReference>
<dbReference type="SUPFAM" id="SSF51182">
    <property type="entry name" value="RmlC-like cupins"/>
    <property type="match status" value="1"/>
</dbReference>
<proteinExistence type="evidence at transcript level"/>
<name>CDO1_DANRE</name>
<gene>
    <name type="primary">cdo1</name>
</gene>
<evidence type="ECO:0000250" key="1">
    <source>
        <dbReference type="UniProtKB" id="P60334"/>
    </source>
</evidence>
<evidence type="ECO:0000250" key="2">
    <source>
        <dbReference type="UniProtKB" id="Q16878"/>
    </source>
</evidence>
<evidence type="ECO:0000305" key="3"/>
<protein>
    <recommendedName>
        <fullName>Cysteine dioxygenase type 1</fullName>
        <ecNumber evidence="2">1.13.11.20</ecNumber>
    </recommendedName>
    <alternativeName>
        <fullName>Cysteine dioxygenase type I</fullName>
        <shortName>CDO</shortName>
        <shortName>CDO-I</shortName>
    </alternativeName>
</protein>
<organism>
    <name type="scientific">Danio rerio</name>
    <name type="common">Zebrafish</name>
    <name type="synonym">Brachydanio rerio</name>
    <dbReference type="NCBI Taxonomy" id="7955"/>
    <lineage>
        <taxon>Eukaryota</taxon>
        <taxon>Metazoa</taxon>
        <taxon>Chordata</taxon>
        <taxon>Craniata</taxon>
        <taxon>Vertebrata</taxon>
        <taxon>Euteleostomi</taxon>
        <taxon>Actinopterygii</taxon>
        <taxon>Neopterygii</taxon>
        <taxon>Teleostei</taxon>
        <taxon>Ostariophysi</taxon>
        <taxon>Cypriniformes</taxon>
        <taxon>Danionidae</taxon>
        <taxon>Danioninae</taxon>
        <taxon>Danio</taxon>
    </lineage>
</organism>